<dbReference type="EMBL" id="CP000246">
    <property type="protein sequence ID" value="ABG83613.1"/>
    <property type="molecule type" value="Genomic_DNA"/>
</dbReference>
<dbReference type="STRING" id="195103.CPF_2995"/>
<dbReference type="PaxDb" id="195103-CPF_2995"/>
<dbReference type="KEGG" id="cpf:CPF_2995"/>
<dbReference type="eggNOG" id="COG0759">
    <property type="taxonomic scope" value="Bacteria"/>
</dbReference>
<dbReference type="HOGENOM" id="CLU_144811_6_0_9"/>
<dbReference type="Proteomes" id="UP000001823">
    <property type="component" value="Chromosome"/>
</dbReference>
<dbReference type="GO" id="GO:0005886">
    <property type="term" value="C:plasma membrane"/>
    <property type="evidence" value="ECO:0007669"/>
    <property type="project" value="UniProtKB-SubCell"/>
</dbReference>
<dbReference type="HAMAP" id="MF_00386">
    <property type="entry name" value="UPF0161_YidD"/>
    <property type="match status" value="1"/>
</dbReference>
<dbReference type="InterPro" id="IPR002696">
    <property type="entry name" value="Membr_insert_effic_factor_YidD"/>
</dbReference>
<dbReference type="NCBIfam" id="TIGR00278">
    <property type="entry name" value="membrane protein insertion efficiency factor YidD"/>
    <property type="match status" value="1"/>
</dbReference>
<dbReference type="PANTHER" id="PTHR33383">
    <property type="entry name" value="MEMBRANE PROTEIN INSERTION EFFICIENCY FACTOR-RELATED"/>
    <property type="match status" value="1"/>
</dbReference>
<dbReference type="PANTHER" id="PTHR33383:SF1">
    <property type="entry name" value="MEMBRANE PROTEIN INSERTION EFFICIENCY FACTOR-RELATED"/>
    <property type="match status" value="1"/>
</dbReference>
<dbReference type="Pfam" id="PF01809">
    <property type="entry name" value="YidD"/>
    <property type="match status" value="1"/>
</dbReference>
<dbReference type="SMART" id="SM01234">
    <property type="entry name" value="Haemolytic"/>
    <property type="match status" value="1"/>
</dbReference>
<feature type="chain" id="PRO_1000013085" description="Putative membrane protein insertion efficiency factor">
    <location>
        <begin position="1"/>
        <end position="69"/>
    </location>
</feature>
<reference key="1">
    <citation type="journal article" date="2006" name="Genome Res.">
        <title>Skewed genomic variability in strains of the toxigenic bacterial pathogen, Clostridium perfringens.</title>
        <authorList>
            <person name="Myers G.S.A."/>
            <person name="Rasko D.A."/>
            <person name="Cheung J.K."/>
            <person name="Ravel J."/>
            <person name="Seshadri R."/>
            <person name="DeBoy R.T."/>
            <person name="Ren Q."/>
            <person name="Varga J."/>
            <person name="Awad M.M."/>
            <person name="Brinkac L.M."/>
            <person name="Daugherty S.C."/>
            <person name="Haft D.H."/>
            <person name="Dodson R.J."/>
            <person name="Madupu R."/>
            <person name="Nelson W.C."/>
            <person name="Rosovitz M.J."/>
            <person name="Sullivan S.A."/>
            <person name="Khouri H."/>
            <person name="Dimitrov G.I."/>
            <person name="Watkins K.L."/>
            <person name="Mulligan S."/>
            <person name="Benton J."/>
            <person name="Radune D."/>
            <person name="Fisher D.J."/>
            <person name="Atkins H.S."/>
            <person name="Hiscox T."/>
            <person name="Jost B.H."/>
            <person name="Billington S.J."/>
            <person name="Songer J.G."/>
            <person name="McClane B.A."/>
            <person name="Titball R.W."/>
            <person name="Rood J.I."/>
            <person name="Melville S.B."/>
            <person name="Paulsen I.T."/>
        </authorList>
    </citation>
    <scope>NUCLEOTIDE SEQUENCE [LARGE SCALE GENOMIC DNA]</scope>
    <source>
        <strain>ATCC 13124 / DSM 756 / JCM 1290 / NCIMB 6125 / NCTC 8237 / S 107 / Type A</strain>
    </source>
</reference>
<proteinExistence type="inferred from homology"/>
<name>YIDD_CLOP1</name>
<accession>Q0TLZ1</accession>
<keyword id="KW-1003">Cell membrane</keyword>
<keyword id="KW-0472">Membrane</keyword>
<protein>
    <recommendedName>
        <fullName evidence="1">Putative membrane protein insertion efficiency factor</fullName>
    </recommendedName>
</protein>
<evidence type="ECO:0000255" key="1">
    <source>
        <dbReference type="HAMAP-Rule" id="MF_00386"/>
    </source>
</evidence>
<organism>
    <name type="scientific">Clostridium perfringens (strain ATCC 13124 / DSM 756 / JCM 1290 / NCIMB 6125 / NCTC 8237 / Type A)</name>
    <dbReference type="NCBI Taxonomy" id="195103"/>
    <lineage>
        <taxon>Bacteria</taxon>
        <taxon>Bacillati</taxon>
        <taxon>Bacillota</taxon>
        <taxon>Clostridia</taxon>
        <taxon>Eubacteriales</taxon>
        <taxon>Clostridiaceae</taxon>
        <taxon>Clostridium</taxon>
    </lineage>
</organism>
<gene>
    <name type="ordered locus">CPF_2995</name>
</gene>
<comment type="function">
    <text evidence="1">Could be involved in insertion of integral membrane proteins into the membrane.</text>
</comment>
<comment type="subcellular location">
    <subcellularLocation>
        <location evidence="1">Cell membrane</location>
        <topology evidence="1">Peripheral membrane protein</topology>
        <orientation evidence="1">Cytoplasmic side</orientation>
    </subcellularLocation>
</comment>
<comment type="similarity">
    <text evidence="1">Belongs to the UPF0161 family.</text>
</comment>
<sequence length="69" mass="8072">MKKLFIVMIKFYRKYISPLKRPCCRFYPTCSQYALEAIQKYGAFKGGFMSIGRILRCNPFCKGGYDPVK</sequence>